<sequence length="452" mass="50097">MQVKETVADGLKREFQVNVPAADIDAKIDEKLADLKDKVRLNGFRPGKVPTAHLKRVYGRSVAAETIDKLVRDTNDGIFSERGFRLATEPKITMPQDQKEIEDILEGKSDLTYTVAIEVVPAIELADFKSFSVEKPVVDVADSDVDEAIKRIADANRAYADKAEGAKAETGDRVTVSFKGTIDGVAFDGGTGEDIPVVIGSASFIPGFEDQLVGIAVGETRTIKVTFPANYASETLAGKPAEFETTATKLEAPQETTIDDEFAKTLGLESLDKLKEAAKARLAAEYAGASRLKVKRQLLDRLDEAHKFDAPPSLIEQEFEVMWRSINAEMQSTGKTFADENTTEDAAKEEYRKIADRRVRLGLVLSEIGEKNKIQVTDDEVSRAVIERARQMPGREKEVWDFYRSNPEALAQLRAPIYEDKVVDFILELANVTEKKVTREELYKDEDDKTAA</sequence>
<keyword id="KW-0131">Cell cycle</keyword>
<keyword id="KW-0132">Cell division</keyword>
<keyword id="KW-0143">Chaperone</keyword>
<keyword id="KW-0963">Cytoplasm</keyword>
<keyword id="KW-0413">Isomerase</keyword>
<keyword id="KW-0697">Rotamase</keyword>
<reference key="1">
    <citation type="journal article" date="2004" name="Nat. Biotechnol.">
        <title>Complete genome sequence of the metabolically versatile photosynthetic bacterium Rhodopseudomonas palustris.</title>
        <authorList>
            <person name="Larimer F.W."/>
            <person name="Chain P."/>
            <person name="Hauser L."/>
            <person name="Lamerdin J.E."/>
            <person name="Malfatti S."/>
            <person name="Do L."/>
            <person name="Land M.L."/>
            <person name="Pelletier D.A."/>
            <person name="Beatty J.T."/>
            <person name="Lang A.S."/>
            <person name="Tabita F.R."/>
            <person name="Gibson J.L."/>
            <person name="Hanson T.E."/>
            <person name="Bobst C."/>
            <person name="Torres y Torres J.L."/>
            <person name="Peres C."/>
            <person name="Harrison F.H."/>
            <person name="Gibson J."/>
            <person name="Harwood C.S."/>
        </authorList>
    </citation>
    <scope>NUCLEOTIDE SEQUENCE [LARGE SCALE GENOMIC DNA]</scope>
    <source>
        <strain>ATCC BAA-98 / CGA009</strain>
    </source>
</reference>
<name>TIG_RHOPA</name>
<accession>Q6N5L2</accession>
<comment type="function">
    <text evidence="1">Involved in protein export. Acts as a chaperone by maintaining the newly synthesized protein in an open conformation. Functions as a peptidyl-prolyl cis-trans isomerase.</text>
</comment>
<comment type="catalytic activity">
    <reaction evidence="1">
        <text>[protein]-peptidylproline (omega=180) = [protein]-peptidylproline (omega=0)</text>
        <dbReference type="Rhea" id="RHEA:16237"/>
        <dbReference type="Rhea" id="RHEA-COMP:10747"/>
        <dbReference type="Rhea" id="RHEA-COMP:10748"/>
        <dbReference type="ChEBI" id="CHEBI:83833"/>
        <dbReference type="ChEBI" id="CHEBI:83834"/>
        <dbReference type="EC" id="5.2.1.8"/>
    </reaction>
</comment>
<comment type="subcellular location">
    <subcellularLocation>
        <location>Cytoplasm</location>
    </subcellularLocation>
    <text evidence="1">About half TF is bound to the ribosome near the polypeptide exit tunnel while the other half is free in the cytoplasm.</text>
</comment>
<comment type="domain">
    <text evidence="1">Consists of 3 domains; the N-terminus binds the ribosome, the middle domain has PPIase activity, while the C-terminus has intrinsic chaperone activity on its own.</text>
</comment>
<comment type="similarity">
    <text evidence="1">Belongs to the FKBP-type PPIase family. Tig subfamily.</text>
</comment>
<feature type="chain" id="PRO_0000179415" description="Trigger factor">
    <location>
        <begin position="1"/>
        <end position="452"/>
    </location>
</feature>
<feature type="domain" description="PPIase FKBP-type" evidence="1">
    <location>
        <begin position="171"/>
        <end position="256"/>
    </location>
</feature>
<evidence type="ECO:0000255" key="1">
    <source>
        <dbReference type="HAMAP-Rule" id="MF_00303"/>
    </source>
</evidence>
<proteinExistence type="inferred from homology"/>
<dbReference type="EC" id="5.2.1.8" evidence="1"/>
<dbReference type="EMBL" id="BX572602">
    <property type="protein sequence ID" value="CAE28403.1"/>
    <property type="molecule type" value="Genomic_DNA"/>
</dbReference>
<dbReference type="RefSeq" id="WP_011158511.1">
    <property type="nucleotide sequence ID" value="NZ_CP116810.1"/>
</dbReference>
<dbReference type="SMR" id="Q6N5L2"/>
<dbReference type="STRING" id="258594.RPA2962"/>
<dbReference type="GeneID" id="66894048"/>
<dbReference type="eggNOG" id="COG0544">
    <property type="taxonomic scope" value="Bacteria"/>
</dbReference>
<dbReference type="HOGENOM" id="CLU_033058_2_2_5"/>
<dbReference type="PhylomeDB" id="Q6N5L2"/>
<dbReference type="GO" id="GO:0005737">
    <property type="term" value="C:cytoplasm"/>
    <property type="evidence" value="ECO:0007669"/>
    <property type="project" value="UniProtKB-SubCell"/>
</dbReference>
<dbReference type="GO" id="GO:0003755">
    <property type="term" value="F:peptidyl-prolyl cis-trans isomerase activity"/>
    <property type="evidence" value="ECO:0007669"/>
    <property type="project" value="UniProtKB-UniRule"/>
</dbReference>
<dbReference type="GO" id="GO:0044183">
    <property type="term" value="F:protein folding chaperone"/>
    <property type="evidence" value="ECO:0007669"/>
    <property type="project" value="TreeGrafter"/>
</dbReference>
<dbReference type="GO" id="GO:0043022">
    <property type="term" value="F:ribosome binding"/>
    <property type="evidence" value="ECO:0007669"/>
    <property type="project" value="TreeGrafter"/>
</dbReference>
<dbReference type="GO" id="GO:0051083">
    <property type="term" value="P:'de novo' cotranslational protein folding"/>
    <property type="evidence" value="ECO:0007669"/>
    <property type="project" value="TreeGrafter"/>
</dbReference>
<dbReference type="GO" id="GO:0051301">
    <property type="term" value="P:cell division"/>
    <property type="evidence" value="ECO:0007669"/>
    <property type="project" value="UniProtKB-KW"/>
</dbReference>
<dbReference type="GO" id="GO:0061077">
    <property type="term" value="P:chaperone-mediated protein folding"/>
    <property type="evidence" value="ECO:0007669"/>
    <property type="project" value="TreeGrafter"/>
</dbReference>
<dbReference type="GO" id="GO:0015031">
    <property type="term" value="P:protein transport"/>
    <property type="evidence" value="ECO:0007669"/>
    <property type="project" value="UniProtKB-UniRule"/>
</dbReference>
<dbReference type="GO" id="GO:0043335">
    <property type="term" value="P:protein unfolding"/>
    <property type="evidence" value="ECO:0007669"/>
    <property type="project" value="TreeGrafter"/>
</dbReference>
<dbReference type="FunFam" id="3.10.50.40:FF:000001">
    <property type="entry name" value="Trigger factor"/>
    <property type="match status" value="1"/>
</dbReference>
<dbReference type="Gene3D" id="3.10.50.40">
    <property type="match status" value="1"/>
</dbReference>
<dbReference type="Gene3D" id="3.30.70.1050">
    <property type="entry name" value="Trigger factor ribosome-binding domain"/>
    <property type="match status" value="1"/>
</dbReference>
<dbReference type="Gene3D" id="1.10.3120.10">
    <property type="entry name" value="Trigger factor, C-terminal domain"/>
    <property type="match status" value="1"/>
</dbReference>
<dbReference type="HAMAP" id="MF_00303">
    <property type="entry name" value="Trigger_factor_Tig"/>
    <property type="match status" value="1"/>
</dbReference>
<dbReference type="InterPro" id="IPR046357">
    <property type="entry name" value="PPIase_dom_sf"/>
</dbReference>
<dbReference type="InterPro" id="IPR001179">
    <property type="entry name" value="PPIase_FKBP_dom"/>
</dbReference>
<dbReference type="InterPro" id="IPR005215">
    <property type="entry name" value="Trig_fac"/>
</dbReference>
<dbReference type="InterPro" id="IPR008880">
    <property type="entry name" value="Trigger_fac_C"/>
</dbReference>
<dbReference type="InterPro" id="IPR037041">
    <property type="entry name" value="Trigger_fac_C_sf"/>
</dbReference>
<dbReference type="InterPro" id="IPR008881">
    <property type="entry name" value="Trigger_fac_ribosome-bd_bac"/>
</dbReference>
<dbReference type="InterPro" id="IPR036611">
    <property type="entry name" value="Trigger_fac_ribosome-bd_sf"/>
</dbReference>
<dbReference type="InterPro" id="IPR027304">
    <property type="entry name" value="Trigger_fact/SurA_dom_sf"/>
</dbReference>
<dbReference type="NCBIfam" id="TIGR00115">
    <property type="entry name" value="tig"/>
    <property type="match status" value="1"/>
</dbReference>
<dbReference type="PANTHER" id="PTHR30560">
    <property type="entry name" value="TRIGGER FACTOR CHAPERONE AND PEPTIDYL-PROLYL CIS/TRANS ISOMERASE"/>
    <property type="match status" value="1"/>
</dbReference>
<dbReference type="PANTHER" id="PTHR30560:SF3">
    <property type="entry name" value="TRIGGER FACTOR-LIKE PROTEIN TIG, CHLOROPLASTIC"/>
    <property type="match status" value="1"/>
</dbReference>
<dbReference type="Pfam" id="PF00254">
    <property type="entry name" value="FKBP_C"/>
    <property type="match status" value="1"/>
</dbReference>
<dbReference type="Pfam" id="PF05698">
    <property type="entry name" value="Trigger_C"/>
    <property type="match status" value="1"/>
</dbReference>
<dbReference type="Pfam" id="PF05697">
    <property type="entry name" value="Trigger_N"/>
    <property type="match status" value="1"/>
</dbReference>
<dbReference type="PIRSF" id="PIRSF003095">
    <property type="entry name" value="Trigger_factor"/>
    <property type="match status" value="1"/>
</dbReference>
<dbReference type="SUPFAM" id="SSF54534">
    <property type="entry name" value="FKBP-like"/>
    <property type="match status" value="1"/>
</dbReference>
<dbReference type="SUPFAM" id="SSF109998">
    <property type="entry name" value="Triger factor/SurA peptide-binding domain-like"/>
    <property type="match status" value="1"/>
</dbReference>
<dbReference type="SUPFAM" id="SSF102735">
    <property type="entry name" value="Trigger factor ribosome-binding domain"/>
    <property type="match status" value="1"/>
</dbReference>
<dbReference type="PROSITE" id="PS50059">
    <property type="entry name" value="FKBP_PPIASE"/>
    <property type="match status" value="1"/>
</dbReference>
<organism>
    <name type="scientific">Rhodopseudomonas palustris (strain ATCC BAA-98 / CGA009)</name>
    <dbReference type="NCBI Taxonomy" id="258594"/>
    <lineage>
        <taxon>Bacteria</taxon>
        <taxon>Pseudomonadati</taxon>
        <taxon>Pseudomonadota</taxon>
        <taxon>Alphaproteobacteria</taxon>
        <taxon>Hyphomicrobiales</taxon>
        <taxon>Nitrobacteraceae</taxon>
        <taxon>Rhodopseudomonas</taxon>
    </lineage>
</organism>
<protein>
    <recommendedName>
        <fullName evidence="1">Trigger factor</fullName>
        <shortName evidence="1">TF</shortName>
        <ecNumber evidence="1">5.2.1.8</ecNumber>
    </recommendedName>
    <alternativeName>
        <fullName evidence="1">PPIase</fullName>
    </alternativeName>
</protein>
<gene>
    <name evidence="1" type="primary">tig</name>
    <name type="ordered locus">RPA2962</name>
</gene>